<reference key="1">
    <citation type="journal article" date="2014" name="Stand. Genomic Sci.">
        <title>Complete genome sequence of Burkholderia phymatum STM815(T), a broad host range and efficient nitrogen-fixing symbiont of Mimosa species.</title>
        <authorList>
            <person name="Moulin L."/>
            <person name="Klonowska A."/>
            <person name="Caroline B."/>
            <person name="Booth K."/>
            <person name="Vriezen J.A."/>
            <person name="Melkonian R."/>
            <person name="James E.K."/>
            <person name="Young J.P."/>
            <person name="Bena G."/>
            <person name="Hauser L."/>
            <person name="Land M."/>
            <person name="Kyrpides N."/>
            <person name="Bruce D."/>
            <person name="Chain P."/>
            <person name="Copeland A."/>
            <person name="Pitluck S."/>
            <person name="Woyke T."/>
            <person name="Lizotte-Waniewski M."/>
            <person name="Bristow J."/>
            <person name="Riley M."/>
        </authorList>
    </citation>
    <scope>NUCLEOTIDE SEQUENCE [LARGE SCALE GENOMIC DNA]</scope>
    <source>
        <strain>DSM 17167 / CIP 108236 / LMG 21445 / STM815</strain>
    </source>
</reference>
<name>DCTA_PARP8</name>
<comment type="function">
    <text evidence="1">Responsible for the transport of dicarboxylates such as succinate, fumarate, and malate from the periplasm across the membrane.</text>
</comment>
<comment type="subcellular location">
    <subcellularLocation>
        <location evidence="1">Cell inner membrane</location>
        <topology evidence="1">Multi-pass membrane protein</topology>
    </subcellularLocation>
</comment>
<comment type="similarity">
    <text evidence="1">Belongs to the dicarboxylate/amino acid:cation symporter (DAACS) (TC 2.A.23) family.</text>
</comment>
<sequence length="426" mass="45185">MKKPIYKVLYVQVIVAIIIGIALGHFYPALATDMKPLGDAFIKLIKMVIGPIIFCTVVTGIAGMEDMKKVGRVGGKALLYFEIVSTFALILGLAATHLLRPGVGFNVDPATLNGKEVASYAAKAHGQTTVDFLMHIIPDTLVSAFSQGEILQILLIALLFGAVLAHVGERGKPVTNFIESLSSILFGMVGIITKLAPIGAFGAMAFTIGKYGIGSLLPMLKLIGTFYLTSIVFVVVVLGFIAKMVGFNILRFVAYIKEEMLIVLGTSSSEAALPQLMLKLEKLGCSRSVVGLVVPTGYSFNLDGTNIYMTMAVLFIAQATNTDLTWGQQLTLLAVTMLTSKGASGVTGAGFITLAATLAVVPTIPLSGMVLILGIDRFMSECRALTNIVGNGVATVVVSAWEKELDRSKLRAALSRDVSVTESAEV</sequence>
<protein>
    <recommendedName>
        <fullName evidence="1">C4-dicarboxylate transport protein</fullName>
    </recommendedName>
</protein>
<evidence type="ECO:0000255" key="1">
    <source>
        <dbReference type="HAMAP-Rule" id="MF_01300"/>
    </source>
</evidence>
<keyword id="KW-0997">Cell inner membrane</keyword>
<keyword id="KW-1003">Cell membrane</keyword>
<keyword id="KW-0472">Membrane</keyword>
<keyword id="KW-1185">Reference proteome</keyword>
<keyword id="KW-0769">Symport</keyword>
<keyword id="KW-0812">Transmembrane</keyword>
<keyword id="KW-1133">Transmembrane helix</keyword>
<keyword id="KW-0813">Transport</keyword>
<feature type="chain" id="PRO_1000140447" description="C4-dicarboxylate transport protein">
    <location>
        <begin position="1"/>
        <end position="426"/>
    </location>
</feature>
<feature type="transmembrane region" description="Helical" evidence="1">
    <location>
        <begin position="8"/>
        <end position="28"/>
    </location>
</feature>
<feature type="transmembrane region" description="Helical" evidence="1">
    <location>
        <begin position="44"/>
        <end position="64"/>
    </location>
</feature>
<feature type="transmembrane region" description="Helical" evidence="1">
    <location>
        <begin position="78"/>
        <end position="98"/>
    </location>
</feature>
<feature type="transmembrane region" description="Helical" evidence="1">
    <location>
        <begin position="148"/>
        <end position="168"/>
    </location>
</feature>
<feature type="transmembrane region" description="Helical" evidence="1">
    <location>
        <begin position="184"/>
        <end position="204"/>
    </location>
</feature>
<feature type="transmembrane region" description="Helical" evidence="1">
    <location>
        <begin position="222"/>
        <end position="242"/>
    </location>
</feature>
<feature type="transmembrane region" description="Helical" evidence="1">
    <location>
        <begin position="297"/>
        <end position="317"/>
    </location>
</feature>
<feature type="transmembrane region" description="Helical" evidence="1">
    <location>
        <begin position="355"/>
        <end position="375"/>
    </location>
</feature>
<accession>B2JC54</accession>
<organism>
    <name type="scientific">Paraburkholderia phymatum (strain DSM 17167 / CIP 108236 / LMG 21445 / STM815)</name>
    <name type="common">Burkholderia phymatum</name>
    <dbReference type="NCBI Taxonomy" id="391038"/>
    <lineage>
        <taxon>Bacteria</taxon>
        <taxon>Pseudomonadati</taxon>
        <taxon>Pseudomonadota</taxon>
        <taxon>Betaproteobacteria</taxon>
        <taxon>Burkholderiales</taxon>
        <taxon>Burkholderiaceae</taxon>
        <taxon>Paraburkholderia</taxon>
    </lineage>
</organism>
<proteinExistence type="inferred from homology"/>
<dbReference type="EMBL" id="CP001043">
    <property type="protein sequence ID" value="ACC69418.1"/>
    <property type="molecule type" value="Genomic_DNA"/>
</dbReference>
<dbReference type="RefSeq" id="WP_012399647.1">
    <property type="nucleotide sequence ID" value="NC_010622.1"/>
</dbReference>
<dbReference type="SMR" id="B2JC54"/>
<dbReference type="STRING" id="391038.Bphy_0225"/>
<dbReference type="KEGG" id="bph:Bphy_0225"/>
<dbReference type="eggNOG" id="COG1301">
    <property type="taxonomic scope" value="Bacteria"/>
</dbReference>
<dbReference type="HOGENOM" id="CLU_019375_7_0_4"/>
<dbReference type="OrthoDB" id="9766690at2"/>
<dbReference type="Proteomes" id="UP000001192">
    <property type="component" value="Chromosome 1"/>
</dbReference>
<dbReference type="GO" id="GO:0005886">
    <property type="term" value="C:plasma membrane"/>
    <property type="evidence" value="ECO:0007669"/>
    <property type="project" value="UniProtKB-SubCell"/>
</dbReference>
<dbReference type="GO" id="GO:0015138">
    <property type="term" value="F:fumarate transmembrane transporter activity"/>
    <property type="evidence" value="ECO:0007669"/>
    <property type="project" value="TreeGrafter"/>
</dbReference>
<dbReference type="GO" id="GO:0015366">
    <property type="term" value="F:malate:proton symporter activity"/>
    <property type="evidence" value="ECO:0007669"/>
    <property type="project" value="TreeGrafter"/>
</dbReference>
<dbReference type="GO" id="GO:0015141">
    <property type="term" value="F:succinate transmembrane transporter activity"/>
    <property type="evidence" value="ECO:0007669"/>
    <property type="project" value="TreeGrafter"/>
</dbReference>
<dbReference type="GO" id="GO:0070778">
    <property type="term" value="P:L-aspartate transmembrane transport"/>
    <property type="evidence" value="ECO:0007669"/>
    <property type="project" value="TreeGrafter"/>
</dbReference>
<dbReference type="FunFam" id="1.10.3860.10:FF:000001">
    <property type="entry name" value="C4-dicarboxylate transport protein"/>
    <property type="match status" value="1"/>
</dbReference>
<dbReference type="Gene3D" id="1.10.3860.10">
    <property type="entry name" value="Sodium:dicarboxylate symporter"/>
    <property type="match status" value="1"/>
</dbReference>
<dbReference type="HAMAP" id="MF_01300">
    <property type="entry name" value="C4_dicarb_transport"/>
    <property type="match status" value="1"/>
</dbReference>
<dbReference type="InterPro" id="IPR023954">
    <property type="entry name" value="C4_dicarb_transport"/>
</dbReference>
<dbReference type="InterPro" id="IPR001991">
    <property type="entry name" value="Na-dicarboxylate_symporter"/>
</dbReference>
<dbReference type="InterPro" id="IPR018107">
    <property type="entry name" value="Na-dicarboxylate_symporter_CS"/>
</dbReference>
<dbReference type="InterPro" id="IPR036458">
    <property type="entry name" value="Na:dicarbo_symporter_sf"/>
</dbReference>
<dbReference type="NCBIfam" id="NF002461">
    <property type="entry name" value="PRK01663.1"/>
    <property type="match status" value="1"/>
</dbReference>
<dbReference type="NCBIfam" id="NF009587">
    <property type="entry name" value="PRK13027.1"/>
    <property type="match status" value="1"/>
</dbReference>
<dbReference type="PANTHER" id="PTHR42865:SF1">
    <property type="entry name" value="AEROBIC C4-DICARBOXYLATE TRANSPORT PROTEIN"/>
    <property type="match status" value="1"/>
</dbReference>
<dbReference type="PANTHER" id="PTHR42865">
    <property type="entry name" value="PROTON/GLUTAMATE-ASPARTATE SYMPORTER"/>
    <property type="match status" value="1"/>
</dbReference>
<dbReference type="Pfam" id="PF00375">
    <property type="entry name" value="SDF"/>
    <property type="match status" value="1"/>
</dbReference>
<dbReference type="PRINTS" id="PR00173">
    <property type="entry name" value="EDTRNSPORT"/>
</dbReference>
<dbReference type="SUPFAM" id="SSF118215">
    <property type="entry name" value="Proton glutamate symport protein"/>
    <property type="match status" value="1"/>
</dbReference>
<dbReference type="PROSITE" id="PS00713">
    <property type="entry name" value="NA_DICARBOXYL_SYMP_1"/>
    <property type="match status" value="1"/>
</dbReference>
<dbReference type="PROSITE" id="PS00714">
    <property type="entry name" value="NA_DICARBOXYL_SYMP_2"/>
    <property type="match status" value="1"/>
</dbReference>
<gene>
    <name evidence="1" type="primary">dctA</name>
    <name type="ordered locus">Bphy_0225</name>
</gene>